<name>PTMCB_HALH5</name>
<keyword id="KW-1003">Cell membrane</keyword>
<keyword id="KW-0418">Kinase</keyword>
<keyword id="KW-0472">Membrane</keyword>
<keyword id="KW-0597">Phosphoprotein</keyword>
<keyword id="KW-0598">Phosphotransferase system</keyword>
<keyword id="KW-1185">Reference proteome</keyword>
<keyword id="KW-0762">Sugar transport</keyword>
<keyword id="KW-0808">Transferase</keyword>
<keyword id="KW-0812">Transmembrane</keyword>
<keyword id="KW-1133">Transmembrane helix</keyword>
<keyword id="KW-0813">Transport</keyword>
<evidence type="ECO:0000250" key="1">
    <source>
        <dbReference type="UniProtKB" id="P00550"/>
    </source>
</evidence>
<evidence type="ECO:0000250" key="2">
    <source>
        <dbReference type="UniProtKB" id="P28008"/>
    </source>
</evidence>
<evidence type="ECO:0000255" key="3">
    <source>
        <dbReference type="PROSITE-ProRule" id="PRU00422"/>
    </source>
</evidence>
<evidence type="ECO:0000255" key="4">
    <source>
        <dbReference type="PROSITE-ProRule" id="PRU00427"/>
    </source>
</evidence>
<feature type="chain" id="PRO_0000186608" description="PTS system mannitol-specific EIICB component">
    <location>
        <begin position="1"/>
        <end position="468"/>
    </location>
</feature>
<feature type="topological domain" description="Cytoplasmic" evidence="1">
    <location>
        <begin position="1"/>
        <end position="25"/>
    </location>
</feature>
<feature type="transmembrane region" description="Helical" evidence="1">
    <location>
        <begin position="26"/>
        <end position="47"/>
    </location>
</feature>
<feature type="topological domain" description="Extracellular" evidence="1">
    <location>
        <begin position="48"/>
        <end position="51"/>
    </location>
</feature>
<feature type="transmembrane region" description="Helical" evidence="1">
    <location>
        <begin position="52"/>
        <end position="72"/>
    </location>
</feature>
<feature type="topological domain" description="Cytoplasmic" evidence="1">
    <location>
        <begin position="73"/>
        <end position="135"/>
    </location>
</feature>
<feature type="transmembrane region" description="Helical" evidence="1">
    <location>
        <begin position="136"/>
        <end position="157"/>
    </location>
</feature>
<feature type="topological domain" description="Extracellular" evidence="1">
    <location>
        <begin position="158"/>
        <end position="166"/>
    </location>
</feature>
<feature type="transmembrane region" description="Helical" evidence="1">
    <location>
        <begin position="167"/>
        <end position="187"/>
    </location>
</feature>
<feature type="topological domain" description="Cytoplasmic" evidence="1">
    <location>
        <begin position="188"/>
        <end position="274"/>
    </location>
</feature>
<feature type="transmembrane region" description="Helical" evidence="1">
    <location>
        <begin position="275"/>
        <end position="294"/>
    </location>
</feature>
<feature type="topological domain" description="Extracellular" evidence="1">
    <location>
        <begin position="295"/>
        <end position="314"/>
    </location>
</feature>
<feature type="transmembrane region" description="Helical" evidence="1">
    <location>
        <begin position="315"/>
        <end position="336"/>
    </location>
</feature>
<feature type="topological domain" description="Cytoplasmic" evidence="1">
    <location>
        <begin position="337"/>
        <end position="468"/>
    </location>
</feature>
<feature type="domain" description="PTS EIIC type-2" evidence="4">
    <location>
        <begin position="14"/>
        <end position="344"/>
    </location>
</feature>
<feature type="domain" description="PTS EIIB type-2" evidence="3">
    <location>
        <begin position="380"/>
        <end position="468"/>
    </location>
</feature>
<feature type="active site" description="Phosphocysteine intermediate; for EIIB activity" evidence="1 2">
    <location>
        <position position="386"/>
    </location>
</feature>
<feature type="modified residue" description="Phosphocysteine; by EIIA" evidence="1 2 3">
    <location>
        <position position="386"/>
    </location>
</feature>
<comment type="function">
    <text evidence="2">The phosphoenolpyruvate-dependent sugar phosphotransferase system (sugar PTS), a major carbohydrate active transport system, catalyzes the phosphorylation of incoming sugar substrates concomitantly with their translocation across the cell membrane. The enzyme II CmtAB PTS system is involved in D-mannitol transport.</text>
</comment>
<comment type="catalytic activity">
    <reaction evidence="1 2">
        <text>D-mannitol(out) + N(pros)-phospho-L-histidyl-[protein] = D-mannitol 1-phosphate(in) + L-histidyl-[protein]</text>
        <dbReference type="Rhea" id="RHEA:33363"/>
        <dbReference type="Rhea" id="RHEA-COMP:9745"/>
        <dbReference type="Rhea" id="RHEA-COMP:9746"/>
        <dbReference type="ChEBI" id="CHEBI:16899"/>
        <dbReference type="ChEBI" id="CHEBI:29979"/>
        <dbReference type="ChEBI" id="CHEBI:61381"/>
        <dbReference type="ChEBI" id="CHEBI:64837"/>
        <dbReference type="EC" id="2.7.1.197"/>
    </reaction>
</comment>
<comment type="subunit">
    <text evidence="2">Homodimer.</text>
</comment>
<comment type="subcellular location">
    <subcellularLocation>
        <location evidence="4">Cell membrane</location>
        <topology evidence="4">Multi-pass membrane protein</topology>
    </subcellularLocation>
</comment>
<comment type="domain">
    <text evidence="4">The EIIC type-2 domain forms the PTS system translocation channel and contains the specific substrate-binding site.</text>
</comment>
<comment type="domain">
    <text evidence="3">The PTS EIIB type-2 domain is phosphorylated by phospho-EIIA on a cysteinyl residue. Then, it transfers the phosphoryl group to the sugar substrate concomitantly with the sugar uptake processed by the PTS EIIC type-2 domain.</text>
</comment>
<gene>
    <name type="primary">mtlA</name>
    <name type="ordered locus">BH3854</name>
</gene>
<organism>
    <name type="scientific">Halalkalibacterium halodurans (strain ATCC BAA-125 / DSM 18197 / FERM 7344 / JCM 9153 / C-125)</name>
    <name type="common">Bacillus halodurans</name>
    <dbReference type="NCBI Taxonomy" id="272558"/>
    <lineage>
        <taxon>Bacteria</taxon>
        <taxon>Bacillati</taxon>
        <taxon>Bacillota</taxon>
        <taxon>Bacilli</taxon>
        <taxon>Bacillales</taxon>
        <taxon>Bacillaceae</taxon>
        <taxon>Halalkalibacterium (ex Joshi et al. 2022)</taxon>
    </lineage>
</organism>
<proteinExistence type="inferred from homology"/>
<dbReference type="EC" id="2.7.1.197" evidence="1 2"/>
<dbReference type="EMBL" id="BA000004">
    <property type="protein sequence ID" value="BAB07573.1"/>
    <property type="molecule type" value="Genomic_DNA"/>
</dbReference>
<dbReference type="PIR" id="F84131">
    <property type="entry name" value="F84131"/>
</dbReference>
<dbReference type="RefSeq" id="WP_010899979.1">
    <property type="nucleotide sequence ID" value="NC_002570.2"/>
</dbReference>
<dbReference type="SMR" id="Q9K678"/>
<dbReference type="STRING" id="272558.gene:10729767"/>
<dbReference type="KEGG" id="bha:BH3854"/>
<dbReference type="eggNOG" id="COG2213">
    <property type="taxonomic scope" value="Bacteria"/>
</dbReference>
<dbReference type="HOGENOM" id="CLU_028721_2_0_9"/>
<dbReference type="OrthoDB" id="9814222at2"/>
<dbReference type="Proteomes" id="UP000001258">
    <property type="component" value="Chromosome"/>
</dbReference>
<dbReference type="GO" id="GO:0005886">
    <property type="term" value="C:plasma membrane"/>
    <property type="evidence" value="ECO:0007669"/>
    <property type="project" value="UniProtKB-SubCell"/>
</dbReference>
<dbReference type="GO" id="GO:0016301">
    <property type="term" value="F:kinase activity"/>
    <property type="evidence" value="ECO:0007669"/>
    <property type="project" value="UniProtKB-KW"/>
</dbReference>
<dbReference type="GO" id="GO:0022872">
    <property type="term" value="F:protein-N(PI)-phosphohistidine-mannitol phosphotransferase system transmembrane transporter activity"/>
    <property type="evidence" value="ECO:0007669"/>
    <property type="project" value="InterPro"/>
</dbReference>
<dbReference type="GO" id="GO:0090563">
    <property type="term" value="F:protein-phosphocysteine-sugar phosphotransferase activity"/>
    <property type="evidence" value="ECO:0007669"/>
    <property type="project" value="TreeGrafter"/>
</dbReference>
<dbReference type="GO" id="GO:0009401">
    <property type="term" value="P:phosphoenolpyruvate-dependent sugar phosphotransferase system"/>
    <property type="evidence" value="ECO:0007669"/>
    <property type="project" value="UniProtKB-KW"/>
</dbReference>
<dbReference type="CDD" id="cd05567">
    <property type="entry name" value="PTS_IIB_mannitol"/>
    <property type="match status" value="1"/>
</dbReference>
<dbReference type="FunFam" id="3.40.50.2300:FF:000047">
    <property type="entry name" value="PTS system mannitol-specific transporter subunit IICBA"/>
    <property type="match status" value="1"/>
</dbReference>
<dbReference type="Gene3D" id="3.40.50.2300">
    <property type="match status" value="1"/>
</dbReference>
<dbReference type="InterPro" id="IPR036095">
    <property type="entry name" value="PTS_EIIB-like_sf"/>
</dbReference>
<dbReference type="InterPro" id="IPR013011">
    <property type="entry name" value="PTS_EIIB_2"/>
</dbReference>
<dbReference type="InterPro" id="IPR003501">
    <property type="entry name" value="PTS_EIIB_2/3"/>
</dbReference>
<dbReference type="InterPro" id="IPR029503">
    <property type="entry name" value="PTS_EIIB_mannitol"/>
</dbReference>
<dbReference type="InterPro" id="IPR003352">
    <property type="entry name" value="PTS_EIIC"/>
</dbReference>
<dbReference type="InterPro" id="IPR013014">
    <property type="entry name" value="PTS_EIIC_2"/>
</dbReference>
<dbReference type="InterPro" id="IPR004718">
    <property type="entry name" value="PTS_IIC_mtl"/>
</dbReference>
<dbReference type="InterPro" id="IPR050893">
    <property type="entry name" value="Sugar_PTS"/>
</dbReference>
<dbReference type="NCBIfam" id="TIGR00851">
    <property type="entry name" value="mtlA"/>
    <property type="match status" value="1"/>
</dbReference>
<dbReference type="NCBIfam" id="NF011663">
    <property type="entry name" value="PRK15083.1"/>
    <property type="match status" value="1"/>
</dbReference>
<dbReference type="PANTHER" id="PTHR30181">
    <property type="entry name" value="MANNITOL PERMEASE IIC COMPONENT"/>
    <property type="match status" value="1"/>
</dbReference>
<dbReference type="PANTHER" id="PTHR30181:SF2">
    <property type="entry name" value="PTS SYSTEM MANNITOL-SPECIFIC EIICBA COMPONENT"/>
    <property type="match status" value="1"/>
</dbReference>
<dbReference type="Pfam" id="PF02378">
    <property type="entry name" value="PTS_EIIC"/>
    <property type="match status" value="1"/>
</dbReference>
<dbReference type="Pfam" id="PF02302">
    <property type="entry name" value="PTS_IIB"/>
    <property type="match status" value="1"/>
</dbReference>
<dbReference type="SUPFAM" id="SSF52794">
    <property type="entry name" value="PTS system IIB component-like"/>
    <property type="match status" value="1"/>
</dbReference>
<dbReference type="PROSITE" id="PS51099">
    <property type="entry name" value="PTS_EIIB_TYPE_2"/>
    <property type="match status" value="1"/>
</dbReference>
<dbReference type="PROSITE" id="PS51104">
    <property type="entry name" value="PTS_EIIC_TYPE_2"/>
    <property type="match status" value="1"/>
</dbReference>
<accession>Q9K678</accession>
<protein>
    <recommendedName>
        <fullName evidence="2">PTS system mannitol-specific EIICB component</fullName>
    </recommendedName>
    <alternativeName>
        <fullName evidence="2">EIICB-Mtl</fullName>
        <shortName evidence="2">EII-Mtl</shortName>
    </alternativeName>
    <domain>
        <recommendedName>
            <fullName evidence="2">Mannitol permease IIC component</fullName>
        </recommendedName>
        <alternativeName>
            <fullName evidence="2">PTS system mannitol-specific EIIC component</fullName>
        </alternativeName>
    </domain>
    <domain>
        <recommendedName>
            <fullName evidence="2">Mannitol-specific phosphotransferase enzyme IIB component</fullName>
            <ecNumber evidence="1 2">2.7.1.197</ecNumber>
        </recommendedName>
        <alternativeName>
            <fullName evidence="2">PTS system mannitol-specific EIIB component</fullName>
        </alternativeName>
    </domain>
</protein>
<sequence>MNNQPSFRARVQKFGSFLSGMIMPNIGAFIAWGLITALFIPTGWWPNEQLAELVGPMITYLLPLLIGYTGGKMIYDVRGGVVGAAATMGVVVGADIPMFIGAMIMGPLGGFLIKKVDQVLQPKVRSGFEMLVNNFSAGILAAILAIVAFLGIGPVVVSFSNVLASGVEVIIGAGLLPLASIFIEPAKVLFLNNAINHGILSPIGIDQAASAGKSILFLLETNPGPGLGVLLAFMVFGKGMAKQSAPGAAVIHFAGGIHEIYFPYILMKPTLILAVIAGGMSGVFTFVLFNAGLVAVPSPGSIFALLAMTPRGEYAGVLAGVIIATVVSFVIASIILKTSKATAEDLTEATSKMEGLKGKESSVKEALITDDEQPQATEVNKIIFACDAGMGSSAMGASILRDKVKKAGLSIEVANTSINQLPDDVDIIITHKDLTDRAKAKNPHAEHISVENFLSSPKYDELVNRLKS</sequence>
<reference key="1">
    <citation type="journal article" date="2000" name="Nucleic Acids Res.">
        <title>Complete genome sequence of the alkaliphilic bacterium Bacillus halodurans and genomic sequence comparison with Bacillus subtilis.</title>
        <authorList>
            <person name="Takami H."/>
            <person name="Nakasone K."/>
            <person name="Takaki Y."/>
            <person name="Maeno G."/>
            <person name="Sasaki R."/>
            <person name="Masui N."/>
            <person name="Fuji F."/>
            <person name="Hirama C."/>
            <person name="Nakamura Y."/>
            <person name="Ogasawara N."/>
            <person name="Kuhara S."/>
            <person name="Horikoshi K."/>
        </authorList>
    </citation>
    <scope>NUCLEOTIDE SEQUENCE [LARGE SCALE GENOMIC DNA]</scope>
    <source>
        <strain>ATCC BAA-125 / DSM 18197 / FERM 7344 / JCM 9153 / C-125</strain>
    </source>
</reference>